<dbReference type="EC" id="5.6.2.2" evidence="1"/>
<dbReference type="EMBL" id="AE014074">
    <property type="protein sequence ID" value="AAM79417.1"/>
    <property type="molecule type" value="Genomic_DNA"/>
</dbReference>
<dbReference type="RefSeq" id="WP_011054496.1">
    <property type="nucleotide sequence ID" value="NC_004070.1"/>
</dbReference>
<dbReference type="SMR" id="P0DG02"/>
<dbReference type="ChEMBL" id="CHEMBL3991502"/>
<dbReference type="GeneID" id="69900861"/>
<dbReference type="KEGG" id="spg:SpyM3_0810"/>
<dbReference type="HOGENOM" id="CLU_002977_6_1_9"/>
<dbReference type="Proteomes" id="UP000000564">
    <property type="component" value="Chromosome"/>
</dbReference>
<dbReference type="GO" id="GO:0005694">
    <property type="term" value="C:chromosome"/>
    <property type="evidence" value="ECO:0007669"/>
    <property type="project" value="InterPro"/>
</dbReference>
<dbReference type="GO" id="GO:0005737">
    <property type="term" value="C:cytoplasm"/>
    <property type="evidence" value="ECO:0007669"/>
    <property type="project" value="UniProtKB-SubCell"/>
</dbReference>
<dbReference type="GO" id="GO:0009330">
    <property type="term" value="C:DNA topoisomerase type II (double strand cut, ATP-hydrolyzing) complex"/>
    <property type="evidence" value="ECO:0007669"/>
    <property type="project" value="TreeGrafter"/>
</dbReference>
<dbReference type="GO" id="GO:0005524">
    <property type="term" value="F:ATP binding"/>
    <property type="evidence" value="ECO:0007669"/>
    <property type="project" value="UniProtKB-UniRule"/>
</dbReference>
<dbReference type="GO" id="GO:0003677">
    <property type="term" value="F:DNA binding"/>
    <property type="evidence" value="ECO:0007669"/>
    <property type="project" value="UniProtKB-UniRule"/>
</dbReference>
<dbReference type="GO" id="GO:0034335">
    <property type="term" value="F:DNA negative supercoiling activity"/>
    <property type="evidence" value="ECO:0007669"/>
    <property type="project" value="UniProtKB-ARBA"/>
</dbReference>
<dbReference type="GO" id="GO:0006265">
    <property type="term" value="P:DNA topological change"/>
    <property type="evidence" value="ECO:0007669"/>
    <property type="project" value="UniProtKB-UniRule"/>
</dbReference>
<dbReference type="GO" id="GO:0006261">
    <property type="term" value="P:DNA-templated DNA replication"/>
    <property type="evidence" value="ECO:0007669"/>
    <property type="project" value="UniProtKB-UniRule"/>
</dbReference>
<dbReference type="CDD" id="cd00187">
    <property type="entry name" value="TOP4c"/>
    <property type="match status" value="1"/>
</dbReference>
<dbReference type="FunFam" id="1.10.268.10:FF:000001">
    <property type="entry name" value="DNA gyrase subunit A"/>
    <property type="match status" value="1"/>
</dbReference>
<dbReference type="FunFam" id="2.120.10.90:FF:000004">
    <property type="entry name" value="DNA gyrase subunit A"/>
    <property type="match status" value="1"/>
</dbReference>
<dbReference type="FunFam" id="3.30.1360.40:FF:000002">
    <property type="entry name" value="DNA gyrase subunit A"/>
    <property type="match status" value="1"/>
</dbReference>
<dbReference type="FunFam" id="3.90.199.10:FF:000001">
    <property type="entry name" value="DNA gyrase subunit A"/>
    <property type="match status" value="1"/>
</dbReference>
<dbReference type="Gene3D" id="3.30.1360.40">
    <property type="match status" value="1"/>
</dbReference>
<dbReference type="Gene3D" id="2.120.10.90">
    <property type="entry name" value="DNA gyrase/topoisomerase IV, subunit A, C-terminal"/>
    <property type="match status" value="1"/>
</dbReference>
<dbReference type="Gene3D" id="3.90.199.10">
    <property type="entry name" value="Topoisomerase II, domain 5"/>
    <property type="match status" value="1"/>
</dbReference>
<dbReference type="Gene3D" id="1.10.268.10">
    <property type="entry name" value="Topoisomerase, domain 3"/>
    <property type="match status" value="1"/>
</dbReference>
<dbReference type="HAMAP" id="MF_01897">
    <property type="entry name" value="GyrA"/>
    <property type="match status" value="1"/>
</dbReference>
<dbReference type="InterPro" id="IPR005743">
    <property type="entry name" value="GyrA"/>
</dbReference>
<dbReference type="InterPro" id="IPR006691">
    <property type="entry name" value="GyrA/parC_rep"/>
</dbReference>
<dbReference type="InterPro" id="IPR035516">
    <property type="entry name" value="Gyrase/topoIV_suA_C"/>
</dbReference>
<dbReference type="InterPro" id="IPR013760">
    <property type="entry name" value="Topo_IIA-like_dom_sf"/>
</dbReference>
<dbReference type="InterPro" id="IPR013758">
    <property type="entry name" value="Topo_IIA_A/C_ab"/>
</dbReference>
<dbReference type="InterPro" id="IPR013757">
    <property type="entry name" value="Topo_IIA_A_a_sf"/>
</dbReference>
<dbReference type="InterPro" id="IPR002205">
    <property type="entry name" value="Topo_IIA_dom_A"/>
</dbReference>
<dbReference type="InterPro" id="IPR050220">
    <property type="entry name" value="Type_II_DNA_Topoisomerases"/>
</dbReference>
<dbReference type="NCBIfam" id="TIGR01063">
    <property type="entry name" value="gyrA"/>
    <property type="match status" value="1"/>
</dbReference>
<dbReference type="NCBIfam" id="NF004043">
    <property type="entry name" value="PRK05560.1"/>
    <property type="match status" value="1"/>
</dbReference>
<dbReference type="NCBIfam" id="NF004044">
    <property type="entry name" value="PRK05561.1"/>
    <property type="match status" value="1"/>
</dbReference>
<dbReference type="PANTHER" id="PTHR43493:SF5">
    <property type="entry name" value="DNA GYRASE SUBUNIT A, CHLOROPLASTIC_MITOCHONDRIAL"/>
    <property type="match status" value="1"/>
</dbReference>
<dbReference type="PANTHER" id="PTHR43493">
    <property type="entry name" value="DNA GYRASE/TOPOISOMERASE SUBUNIT A"/>
    <property type="match status" value="1"/>
</dbReference>
<dbReference type="Pfam" id="PF03989">
    <property type="entry name" value="DNA_gyraseA_C"/>
    <property type="match status" value="6"/>
</dbReference>
<dbReference type="Pfam" id="PF00521">
    <property type="entry name" value="DNA_topoisoIV"/>
    <property type="match status" value="1"/>
</dbReference>
<dbReference type="SMART" id="SM00434">
    <property type="entry name" value="TOP4c"/>
    <property type="match status" value="1"/>
</dbReference>
<dbReference type="SUPFAM" id="SSF101904">
    <property type="entry name" value="GyrA/ParC C-terminal domain-like"/>
    <property type="match status" value="1"/>
</dbReference>
<dbReference type="SUPFAM" id="SSF56719">
    <property type="entry name" value="Type II DNA topoisomerase"/>
    <property type="match status" value="1"/>
</dbReference>
<dbReference type="PROSITE" id="PS52040">
    <property type="entry name" value="TOPO_IIA"/>
    <property type="match status" value="1"/>
</dbReference>
<reference key="1">
    <citation type="journal article" date="2002" name="Proc. Natl. Acad. Sci. U.S.A.">
        <title>Genome sequence of a serotype M3 strain of group A Streptococcus: phage-encoded toxins, the high-virulence phenotype, and clone emergence.</title>
        <authorList>
            <person name="Beres S.B."/>
            <person name="Sylva G.L."/>
            <person name="Barbian K.D."/>
            <person name="Lei B."/>
            <person name="Hoff J.S."/>
            <person name="Mammarella N.D."/>
            <person name="Liu M.-Y."/>
            <person name="Smoot J.C."/>
            <person name="Porcella S.F."/>
            <person name="Parkins L.D."/>
            <person name="Campbell D.S."/>
            <person name="Smith T.M."/>
            <person name="McCormick J.K."/>
            <person name="Leung D.Y.M."/>
            <person name="Schlievert P.M."/>
            <person name="Musser J.M."/>
        </authorList>
    </citation>
    <scope>NUCLEOTIDE SEQUENCE [LARGE SCALE GENOMIC DNA]</scope>
    <source>
        <strain>ATCC BAA-595 / MGAS315</strain>
    </source>
</reference>
<accession>P0DG02</accession>
<accession>Q79X71</accession>
<accession>Q8K7H2</accession>
<organism>
    <name type="scientific">Streptococcus pyogenes serotype M3 (strain ATCC BAA-595 / MGAS315)</name>
    <dbReference type="NCBI Taxonomy" id="198466"/>
    <lineage>
        <taxon>Bacteria</taxon>
        <taxon>Bacillati</taxon>
        <taxon>Bacillota</taxon>
        <taxon>Bacilli</taxon>
        <taxon>Lactobacillales</taxon>
        <taxon>Streptococcaceae</taxon>
        <taxon>Streptococcus</taxon>
    </lineage>
</organism>
<protein>
    <recommendedName>
        <fullName evidence="1">DNA gyrase subunit A</fullName>
        <ecNumber evidence="1">5.6.2.2</ecNumber>
    </recommendedName>
</protein>
<feature type="chain" id="PRO_0000145265" description="DNA gyrase subunit A">
    <location>
        <begin position="1"/>
        <end position="828"/>
    </location>
</feature>
<feature type="domain" description="Topo IIA-type catalytic" evidence="2">
    <location>
        <begin position="32"/>
        <end position="497"/>
    </location>
</feature>
<feature type="short sequence motif" description="GyrA-box" evidence="1">
    <location>
        <begin position="524"/>
        <end position="530"/>
    </location>
</feature>
<feature type="active site" description="O-(5'-phospho-DNA)-tyrosine intermediate" evidence="1">
    <location>
        <position position="120"/>
    </location>
</feature>
<evidence type="ECO:0000255" key="1">
    <source>
        <dbReference type="HAMAP-Rule" id="MF_01897"/>
    </source>
</evidence>
<evidence type="ECO:0000255" key="2">
    <source>
        <dbReference type="PROSITE-ProRule" id="PRU01384"/>
    </source>
</evidence>
<sequence length="828" mass="92690">MQDRNLIDVNLTSEMKTSFIDYAMSVIVARALPDVRDGLKPVHRRILYGMNELGVTPDKPHKKSARITGDVMGKYHPHGDSSIYEAMVRMAQWWSYRHMLVDGHGNFGSMDGDGAAAQRYTEARMSKIALELLRDINKNTVNFQDNYDGSEREPVVLPARFPNLLVNGATGIAVGMATNIPPHNLAESIDAVKMVMEHPDCTTRELMEVIPGPDFPTGALVMGRSGIHRAYDTGKGSIVLRSRTEIETTQTGRERIVVTEFPYGVNKTKVHEHIVRLAQEKRLEGITAVRDESSREGVRFVIEIRREASATVILNNLFKLTSLQTNFSFNMLAIENGVPKILSLRQIIDNYISHQKEVIIRRTRFDKDKAEARAHILEGLLIALDHLDEVIAIIRNSETDVIAQTELMSRFDLSERQSQAILDMRLRRLTGLERDKIQSEYDDLLALIADLSDILAKPERIITIIKEEMDEIKRKYANPRRTELMVGEVLSLEDEDLIEEEDVLITLSNKGYIKRLAQDEFRAQKRGGRGVQGTGVNNDDFVRELVSTSTHDTLLFFTNFGRVYRLKAYEIPEYGRTAKGLPIVNLLKLEDGETIQTIINARKEETAGKSFFFTTKQGIVKRTEVSEFNNIRQNGLRALKLKEGDQLINVLLTSGQDDIIIGTHSGYSVRFNEASIRNMGRSATGVRGVKLREDDRVVGASRIQDNQEVLVITENGFGKRTSATDYPTKGRGGKGIKTANITPKNGQLAGLVTVDGTEDIMVITNKGVIIRTNVANISQTGRATLGVKIMKLDADAKIVTFTLVQPEDSSIAEINTDRENSISKNKDN</sequence>
<name>GYRA_STRP3</name>
<gene>
    <name evidence="1" type="primary">gyrA</name>
    <name type="ordered locus">SpyM3_0810</name>
</gene>
<comment type="function">
    <text evidence="1">A type II topoisomerase that negatively supercoils closed circular double-stranded (ds) DNA in an ATP-dependent manner to modulate DNA topology and maintain chromosomes in an underwound state. Negative supercoiling favors strand separation, and DNA replication, transcription, recombination and repair, all of which involve strand separation. Also able to catalyze the interconversion of other topological isomers of dsDNA rings, including catenanes and knotted rings. Type II topoisomerases break and join 2 DNA strands simultaneously in an ATP-dependent manner.</text>
</comment>
<comment type="catalytic activity">
    <reaction evidence="1">
        <text>ATP-dependent breakage, passage and rejoining of double-stranded DNA.</text>
        <dbReference type="EC" id="5.6.2.2"/>
    </reaction>
</comment>
<comment type="subunit">
    <text evidence="1">Heterotetramer, composed of two GyrA and two GyrB chains. In the heterotetramer, GyrA contains the active site tyrosine that forms a transient covalent intermediate with DNA, while GyrB binds cofactors and catalyzes ATP hydrolysis.</text>
</comment>
<comment type="subcellular location">
    <subcellularLocation>
        <location evidence="1">Cytoplasm</location>
    </subcellularLocation>
</comment>
<comment type="miscellaneous">
    <text evidence="1">Few gyrases are as efficient as E.coli at forming negative supercoils. Not all organisms have 2 type II topoisomerases; in organisms with a single type II topoisomerase this enzyme also has to decatenate newly replicated chromosomes.</text>
</comment>
<comment type="similarity">
    <text evidence="1">Belongs to the type II topoisomerase GyrA/ParC subunit family.</text>
</comment>
<keyword id="KW-0067">ATP-binding</keyword>
<keyword id="KW-0963">Cytoplasm</keyword>
<keyword id="KW-0238">DNA-binding</keyword>
<keyword id="KW-0413">Isomerase</keyword>
<keyword id="KW-0547">Nucleotide-binding</keyword>
<keyword id="KW-0799">Topoisomerase</keyword>
<proteinExistence type="inferred from homology"/>